<accession>A1BHD6</accession>
<reference key="1">
    <citation type="submission" date="2006-12" db="EMBL/GenBank/DDBJ databases">
        <title>Complete sequence of Chlorobium phaeobacteroides DSM 266.</title>
        <authorList>
            <consortium name="US DOE Joint Genome Institute"/>
            <person name="Copeland A."/>
            <person name="Lucas S."/>
            <person name="Lapidus A."/>
            <person name="Barry K."/>
            <person name="Detter J.C."/>
            <person name="Glavina del Rio T."/>
            <person name="Hammon N."/>
            <person name="Israni S."/>
            <person name="Pitluck S."/>
            <person name="Goltsman E."/>
            <person name="Schmutz J."/>
            <person name="Larimer F."/>
            <person name="Land M."/>
            <person name="Hauser L."/>
            <person name="Mikhailova N."/>
            <person name="Li T."/>
            <person name="Overmann J."/>
            <person name="Bryant D.A."/>
            <person name="Richardson P."/>
        </authorList>
    </citation>
    <scope>NUCLEOTIDE SEQUENCE [LARGE SCALE GENOMIC DNA]</scope>
    <source>
        <strain>DSM 266 / SMG 266 / 2430</strain>
    </source>
</reference>
<keyword id="KW-0149">Chlorophyll biosynthesis</keyword>
<keyword id="KW-0627">Porphyrin biosynthesis</keyword>
<keyword id="KW-1185">Reference proteome</keyword>
<keyword id="KW-0808">Transferase</keyword>
<comment type="function">
    <text evidence="1">Tetrapolymerization of the monopyrrole PBG into the hydroxymethylbilane pre-uroporphyrinogen in several discrete steps.</text>
</comment>
<comment type="catalytic activity">
    <reaction evidence="1">
        <text>4 porphobilinogen + H2O = hydroxymethylbilane + 4 NH4(+)</text>
        <dbReference type="Rhea" id="RHEA:13185"/>
        <dbReference type="ChEBI" id="CHEBI:15377"/>
        <dbReference type="ChEBI" id="CHEBI:28938"/>
        <dbReference type="ChEBI" id="CHEBI:57845"/>
        <dbReference type="ChEBI" id="CHEBI:58126"/>
        <dbReference type="EC" id="2.5.1.61"/>
    </reaction>
</comment>
<comment type="cofactor">
    <cofactor evidence="1">
        <name>dipyrromethane</name>
        <dbReference type="ChEBI" id="CHEBI:60342"/>
    </cofactor>
    <text evidence="1">Binds 1 dipyrromethane group covalently.</text>
</comment>
<comment type="pathway">
    <text evidence="1">Porphyrin-containing compound metabolism; protoporphyrin-IX biosynthesis; coproporphyrinogen-III from 5-aminolevulinate: step 2/4.</text>
</comment>
<comment type="pathway">
    <text evidence="1">Porphyrin-containing compound metabolism; chlorophyll biosynthesis.</text>
</comment>
<comment type="subunit">
    <text evidence="1">Monomer.</text>
</comment>
<comment type="miscellaneous">
    <text evidence="1">The porphobilinogen subunits are added to the dipyrromethane group.</text>
</comment>
<comment type="similarity">
    <text evidence="1">Belongs to the HMBS family.</text>
</comment>
<dbReference type="EC" id="2.5.1.61" evidence="1"/>
<dbReference type="EMBL" id="CP000492">
    <property type="protein sequence ID" value="ABL65813.1"/>
    <property type="molecule type" value="Genomic_DNA"/>
</dbReference>
<dbReference type="RefSeq" id="WP_011745620.1">
    <property type="nucleotide sequence ID" value="NC_008639.1"/>
</dbReference>
<dbReference type="SMR" id="A1BHD6"/>
<dbReference type="STRING" id="290317.Cpha266_1796"/>
<dbReference type="KEGG" id="cph:Cpha266_1796"/>
<dbReference type="eggNOG" id="COG0181">
    <property type="taxonomic scope" value="Bacteria"/>
</dbReference>
<dbReference type="HOGENOM" id="CLU_019704_0_2_10"/>
<dbReference type="OrthoDB" id="9810298at2"/>
<dbReference type="UniPathway" id="UPA00251">
    <property type="reaction ID" value="UER00319"/>
</dbReference>
<dbReference type="UniPathway" id="UPA00668"/>
<dbReference type="Proteomes" id="UP000008701">
    <property type="component" value="Chromosome"/>
</dbReference>
<dbReference type="GO" id="GO:0005737">
    <property type="term" value="C:cytoplasm"/>
    <property type="evidence" value="ECO:0007669"/>
    <property type="project" value="TreeGrafter"/>
</dbReference>
<dbReference type="GO" id="GO:0004418">
    <property type="term" value="F:hydroxymethylbilane synthase activity"/>
    <property type="evidence" value="ECO:0007669"/>
    <property type="project" value="UniProtKB-UniRule"/>
</dbReference>
<dbReference type="GO" id="GO:0015995">
    <property type="term" value="P:chlorophyll biosynthetic process"/>
    <property type="evidence" value="ECO:0007669"/>
    <property type="project" value="UniProtKB-UniRule"/>
</dbReference>
<dbReference type="GO" id="GO:0006782">
    <property type="term" value="P:protoporphyrinogen IX biosynthetic process"/>
    <property type="evidence" value="ECO:0007669"/>
    <property type="project" value="UniProtKB-UniRule"/>
</dbReference>
<dbReference type="CDD" id="cd13646">
    <property type="entry name" value="PBP2_EcHMBS_like"/>
    <property type="match status" value="1"/>
</dbReference>
<dbReference type="FunFam" id="3.30.160.40:FF:000002">
    <property type="entry name" value="Porphobilinogen deaminase"/>
    <property type="match status" value="1"/>
</dbReference>
<dbReference type="FunFam" id="3.40.190.10:FF:000004">
    <property type="entry name" value="Porphobilinogen deaminase"/>
    <property type="match status" value="1"/>
</dbReference>
<dbReference type="FunFam" id="3.40.190.10:FF:000005">
    <property type="entry name" value="Porphobilinogen deaminase"/>
    <property type="match status" value="1"/>
</dbReference>
<dbReference type="Gene3D" id="3.40.190.10">
    <property type="entry name" value="Periplasmic binding protein-like II"/>
    <property type="match status" value="2"/>
</dbReference>
<dbReference type="Gene3D" id="3.30.160.40">
    <property type="entry name" value="Porphobilinogen deaminase, C-terminal domain"/>
    <property type="match status" value="1"/>
</dbReference>
<dbReference type="HAMAP" id="MF_00260">
    <property type="entry name" value="Porphobil_deam"/>
    <property type="match status" value="1"/>
</dbReference>
<dbReference type="InterPro" id="IPR000860">
    <property type="entry name" value="HemC"/>
</dbReference>
<dbReference type="InterPro" id="IPR022419">
    <property type="entry name" value="Porphobilin_deaminase_cofac_BS"/>
</dbReference>
<dbReference type="InterPro" id="IPR022417">
    <property type="entry name" value="Porphobilin_deaminase_N"/>
</dbReference>
<dbReference type="InterPro" id="IPR022418">
    <property type="entry name" value="Porphobilinogen_deaminase_C"/>
</dbReference>
<dbReference type="InterPro" id="IPR036803">
    <property type="entry name" value="Porphobilinogen_deaminase_C_sf"/>
</dbReference>
<dbReference type="NCBIfam" id="TIGR00212">
    <property type="entry name" value="hemC"/>
    <property type="match status" value="1"/>
</dbReference>
<dbReference type="PANTHER" id="PTHR11557">
    <property type="entry name" value="PORPHOBILINOGEN DEAMINASE"/>
    <property type="match status" value="1"/>
</dbReference>
<dbReference type="PANTHER" id="PTHR11557:SF0">
    <property type="entry name" value="PORPHOBILINOGEN DEAMINASE"/>
    <property type="match status" value="1"/>
</dbReference>
<dbReference type="Pfam" id="PF01379">
    <property type="entry name" value="Porphobil_deam"/>
    <property type="match status" value="1"/>
</dbReference>
<dbReference type="Pfam" id="PF03900">
    <property type="entry name" value="Porphobil_deamC"/>
    <property type="match status" value="1"/>
</dbReference>
<dbReference type="PIRSF" id="PIRSF001438">
    <property type="entry name" value="4pyrrol_synth_OHMeBilane_synth"/>
    <property type="match status" value="1"/>
</dbReference>
<dbReference type="PRINTS" id="PR00151">
    <property type="entry name" value="PORPHBDMNASE"/>
</dbReference>
<dbReference type="SUPFAM" id="SSF53850">
    <property type="entry name" value="Periplasmic binding protein-like II"/>
    <property type="match status" value="1"/>
</dbReference>
<dbReference type="SUPFAM" id="SSF54782">
    <property type="entry name" value="Porphobilinogen deaminase (hydroxymethylbilane synthase), C-terminal domain"/>
    <property type="match status" value="1"/>
</dbReference>
<dbReference type="PROSITE" id="PS00533">
    <property type="entry name" value="PORPHOBILINOGEN_DEAM"/>
    <property type="match status" value="1"/>
</dbReference>
<feature type="chain" id="PRO_0000304227" description="Porphobilinogen deaminase">
    <location>
        <begin position="1"/>
        <end position="313"/>
    </location>
</feature>
<feature type="modified residue" description="S-(dipyrrolylmethanemethyl)cysteine" evidence="1">
    <location>
        <position position="241"/>
    </location>
</feature>
<evidence type="ECO:0000255" key="1">
    <source>
        <dbReference type="HAMAP-Rule" id="MF_00260"/>
    </source>
</evidence>
<sequence length="313" mass="34891">MKKQLIIGTRSSPLALWQAEFTKAELSRHYPELDITLKLVKTTGDVLLDSPLSKIGDMGLFTKDIEKHLIAKEIDLAVHSLKDVPTSTPEGLIITSFTEREDTRDVIISRSGETLLNLPQNARIATSSLRRMSQLLSMRPDFEICDIRGNLNTRFKKFDEGEFDAMMLAYAGVFRLKFSDRISEILPHDVMLPAVGQGALGIETRVDDEQTREIVRILNHSNTEYCCRAERALLRHLQGGCQIPIGAYASFKNGTLKLLAFVGSVNGKIGLRNEITKTGLVSPEQAEEAGIELAKELLKQGADEILSEIRKTR</sequence>
<proteinExistence type="inferred from homology"/>
<protein>
    <recommendedName>
        <fullName evidence="1">Porphobilinogen deaminase</fullName>
        <shortName evidence="1">PBG</shortName>
        <ecNumber evidence="1">2.5.1.61</ecNumber>
    </recommendedName>
    <alternativeName>
        <fullName evidence="1">Hydroxymethylbilane synthase</fullName>
        <shortName evidence="1">HMBS</shortName>
    </alternativeName>
    <alternativeName>
        <fullName evidence="1">Pre-uroporphyrinogen synthase</fullName>
    </alternativeName>
</protein>
<organism>
    <name type="scientific">Chlorobium phaeobacteroides (strain DSM 266 / SMG 266 / 2430)</name>
    <dbReference type="NCBI Taxonomy" id="290317"/>
    <lineage>
        <taxon>Bacteria</taxon>
        <taxon>Pseudomonadati</taxon>
        <taxon>Chlorobiota</taxon>
        <taxon>Chlorobiia</taxon>
        <taxon>Chlorobiales</taxon>
        <taxon>Chlorobiaceae</taxon>
        <taxon>Chlorobium/Pelodictyon group</taxon>
        <taxon>Chlorobium</taxon>
    </lineage>
</organism>
<gene>
    <name evidence="1" type="primary">hemC</name>
    <name type="ordered locus">Cpha266_1796</name>
</gene>
<name>HEM3_CHLPD</name>